<comment type="catalytic activity">
    <reaction evidence="1">
        <text>tRNA(Cys) + L-cysteine + ATP = L-cysteinyl-tRNA(Cys) + AMP + diphosphate</text>
        <dbReference type="Rhea" id="RHEA:17773"/>
        <dbReference type="Rhea" id="RHEA-COMP:9661"/>
        <dbReference type="Rhea" id="RHEA-COMP:9679"/>
        <dbReference type="ChEBI" id="CHEBI:30616"/>
        <dbReference type="ChEBI" id="CHEBI:33019"/>
        <dbReference type="ChEBI" id="CHEBI:35235"/>
        <dbReference type="ChEBI" id="CHEBI:78442"/>
        <dbReference type="ChEBI" id="CHEBI:78517"/>
        <dbReference type="ChEBI" id="CHEBI:456215"/>
        <dbReference type="EC" id="6.1.1.16"/>
    </reaction>
</comment>
<comment type="cofactor">
    <cofactor evidence="1">
        <name>Zn(2+)</name>
        <dbReference type="ChEBI" id="CHEBI:29105"/>
    </cofactor>
    <text evidence="1">Binds 1 zinc ion per subunit.</text>
</comment>
<comment type="subunit">
    <text evidence="1">Monomer.</text>
</comment>
<comment type="subcellular location">
    <subcellularLocation>
        <location evidence="1">Cytoplasm</location>
    </subcellularLocation>
</comment>
<comment type="similarity">
    <text evidence="1">Belongs to the class-I aminoacyl-tRNA synthetase family.</text>
</comment>
<proteinExistence type="inferred from homology"/>
<feature type="chain" id="PRO_0000159449" description="Cysteine--tRNA ligase">
    <location>
        <begin position="1"/>
        <end position="438"/>
    </location>
</feature>
<feature type="short sequence motif" description="'HIGH' region">
    <location>
        <begin position="30"/>
        <end position="40"/>
    </location>
</feature>
<feature type="short sequence motif" description="'KMSKS' region">
    <location>
        <begin position="264"/>
        <end position="268"/>
    </location>
</feature>
<feature type="binding site" evidence="1">
    <location>
        <position position="28"/>
    </location>
    <ligand>
        <name>Zn(2+)</name>
        <dbReference type="ChEBI" id="CHEBI:29105"/>
    </ligand>
</feature>
<feature type="binding site" evidence="1">
    <location>
        <position position="207"/>
    </location>
    <ligand>
        <name>Zn(2+)</name>
        <dbReference type="ChEBI" id="CHEBI:29105"/>
    </ligand>
</feature>
<feature type="binding site" evidence="1">
    <location>
        <position position="232"/>
    </location>
    <ligand>
        <name>Zn(2+)</name>
        <dbReference type="ChEBI" id="CHEBI:29105"/>
    </ligand>
</feature>
<feature type="binding site" evidence="1">
    <location>
        <position position="236"/>
    </location>
    <ligand>
        <name>Zn(2+)</name>
        <dbReference type="ChEBI" id="CHEBI:29105"/>
    </ligand>
</feature>
<feature type="binding site" evidence="1">
    <location>
        <position position="267"/>
    </location>
    <ligand>
        <name>ATP</name>
        <dbReference type="ChEBI" id="CHEBI:30616"/>
    </ligand>
</feature>
<organism>
    <name type="scientific">Onion yellows phytoplasma (strain OY-M)</name>
    <dbReference type="NCBI Taxonomy" id="262768"/>
    <lineage>
        <taxon>Bacteria</taxon>
        <taxon>Bacillati</taxon>
        <taxon>Mycoplasmatota</taxon>
        <taxon>Mollicutes</taxon>
        <taxon>Acholeplasmatales</taxon>
        <taxon>Acholeplasmataceae</taxon>
        <taxon>Candidatus Phytoplasma</taxon>
        <taxon>16SrI (Aster yellows group)</taxon>
    </lineage>
</organism>
<sequence length="438" mass="51684">MLKIYNSLTRKKEFFNPAHPPQINMYVCGPTVYNHLHLGNTRPLIFFDTVKRYLEMLNFRVYYVVNITDIDDKIIENALKNQVLEQDLANKYIKSFNNLLKTLNIQTINFKPQATQYINSMIVYIQTLLDQGFAYFTDQGIYFRVSKIDDYGKLKKQDLSQLKQNARKQLDPQKEFPGDFILWKKTSQGITYPSPWFAGRPGWHTECATMIEQLFKLPLDIHGGGTDLKFPHHENEIAQTHAHSHQKLANFFMHVERLDYQNQKMSKSLGNIIWCKDLLKQYNPCIIKLLILSTHYRKPINFSYDLMEQAQQKYQKITDFLTKNNFYLKVNQFSCQALDQDIMQLFHQLMQDDLATHKVIDLMEQTIKQAHQTQILDKLSQFQNSLLLILNILGITIPFNKPTKTDLQTYFLWQDARKYRDFAQADILRKQLLDKGFI</sequence>
<dbReference type="EC" id="6.1.1.16" evidence="1"/>
<dbReference type="EMBL" id="AP006628">
    <property type="protein sequence ID" value="BAD04226.1"/>
    <property type="molecule type" value="Genomic_DNA"/>
</dbReference>
<dbReference type="SMR" id="Q6YR75"/>
<dbReference type="STRING" id="262768.PAM_141"/>
<dbReference type="KEGG" id="poy:PAM_141"/>
<dbReference type="eggNOG" id="COG0215">
    <property type="taxonomic scope" value="Bacteria"/>
</dbReference>
<dbReference type="HOGENOM" id="CLU_013528_0_0_14"/>
<dbReference type="BioCyc" id="OYEL262768:G1G26-173-MONOMER"/>
<dbReference type="Proteomes" id="UP000002523">
    <property type="component" value="Chromosome"/>
</dbReference>
<dbReference type="GO" id="GO:0005829">
    <property type="term" value="C:cytosol"/>
    <property type="evidence" value="ECO:0007669"/>
    <property type="project" value="TreeGrafter"/>
</dbReference>
<dbReference type="GO" id="GO:0005524">
    <property type="term" value="F:ATP binding"/>
    <property type="evidence" value="ECO:0007669"/>
    <property type="project" value="UniProtKB-UniRule"/>
</dbReference>
<dbReference type="GO" id="GO:0004817">
    <property type="term" value="F:cysteine-tRNA ligase activity"/>
    <property type="evidence" value="ECO:0007669"/>
    <property type="project" value="UniProtKB-UniRule"/>
</dbReference>
<dbReference type="GO" id="GO:0008270">
    <property type="term" value="F:zinc ion binding"/>
    <property type="evidence" value="ECO:0007669"/>
    <property type="project" value="UniProtKB-UniRule"/>
</dbReference>
<dbReference type="GO" id="GO:0006423">
    <property type="term" value="P:cysteinyl-tRNA aminoacylation"/>
    <property type="evidence" value="ECO:0007669"/>
    <property type="project" value="UniProtKB-UniRule"/>
</dbReference>
<dbReference type="CDD" id="cd00672">
    <property type="entry name" value="CysRS_core"/>
    <property type="match status" value="1"/>
</dbReference>
<dbReference type="Gene3D" id="1.20.120.1910">
    <property type="entry name" value="Cysteine-tRNA ligase, C-terminal anti-codon recognition domain"/>
    <property type="match status" value="1"/>
</dbReference>
<dbReference type="Gene3D" id="3.40.50.620">
    <property type="entry name" value="HUPs"/>
    <property type="match status" value="1"/>
</dbReference>
<dbReference type="HAMAP" id="MF_00041">
    <property type="entry name" value="Cys_tRNA_synth"/>
    <property type="match status" value="1"/>
</dbReference>
<dbReference type="InterPro" id="IPR015803">
    <property type="entry name" value="Cys-tRNA-ligase"/>
</dbReference>
<dbReference type="InterPro" id="IPR024909">
    <property type="entry name" value="Cys-tRNA/MSH_ligase"/>
</dbReference>
<dbReference type="InterPro" id="IPR014729">
    <property type="entry name" value="Rossmann-like_a/b/a_fold"/>
</dbReference>
<dbReference type="InterPro" id="IPR032678">
    <property type="entry name" value="tRNA-synt_1_cat_dom"/>
</dbReference>
<dbReference type="InterPro" id="IPR009080">
    <property type="entry name" value="tRNAsynth_Ia_anticodon-bd"/>
</dbReference>
<dbReference type="NCBIfam" id="TIGR00435">
    <property type="entry name" value="cysS"/>
    <property type="match status" value="1"/>
</dbReference>
<dbReference type="PANTHER" id="PTHR10890:SF3">
    <property type="entry name" value="CYSTEINE--TRNA LIGASE, CYTOPLASMIC"/>
    <property type="match status" value="1"/>
</dbReference>
<dbReference type="PANTHER" id="PTHR10890">
    <property type="entry name" value="CYSTEINYL-TRNA SYNTHETASE"/>
    <property type="match status" value="1"/>
</dbReference>
<dbReference type="Pfam" id="PF01406">
    <property type="entry name" value="tRNA-synt_1e"/>
    <property type="match status" value="1"/>
</dbReference>
<dbReference type="PRINTS" id="PR00983">
    <property type="entry name" value="TRNASYNTHCYS"/>
</dbReference>
<dbReference type="SUPFAM" id="SSF47323">
    <property type="entry name" value="Anticodon-binding domain of a subclass of class I aminoacyl-tRNA synthetases"/>
    <property type="match status" value="1"/>
</dbReference>
<dbReference type="SUPFAM" id="SSF52374">
    <property type="entry name" value="Nucleotidylyl transferase"/>
    <property type="match status" value="1"/>
</dbReference>
<reference key="1">
    <citation type="journal article" date="2004" name="Nat. Genet.">
        <title>Reductive evolution suggested from the complete genome sequence of a plant-pathogenic phytoplasma.</title>
        <authorList>
            <person name="Oshima K."/>
            <person name="Kakizawa S."/>
            <person name="Nishigawa H."/>
            <person name="Jung H.-Y."/>
            <person name="Wei W."/>
            <person name="Suzuki S."/>
            <person name="Arashida R."/>
            <person name="Nakata D."/>
            <person name="Miyata S."/>
            <person name="Ugaki M."/>
            <person name="Namba S."/>
        </authorList>
    </citation>
    <scope>NUCLEOTIDE SEQUENCE [LARGE SCALE GENOMIC DNA]</scope>
    <source>
        <strain>OY-M</strain>
    </source>
</reference>
<accession>Q6YR75</accession>
<keyword id="KW-0030">Aminoacyl-tRNA synthetase</keyword>
<keyword id="KW-0067">ATP-binding</keyword>
<keyword id="KW-0963">Cytoplasm</keyword>
<keyword id="KW-0436">Ligase</keyword>
<keyword id="KW-0479">Metal-binding</keyword>
<keyword id="KW-0547">Nucleotide-binding</keyword>
<keyword id="KW-0648">Protein biosynthesis</keyword>
<keyword id="KW-0862">Zinc</keyword>
<protein>
    <recommendedName>
        <fullName evidence="1">Cysteine--tRNA ligase</fullName>
        <ecNumber evidence="1">6.1.1.16</ecNumber>
    </recommendedName>
    <alternativeName>
        <fullName evidence="1">Cysteinyl-tRNA synthetase</fullName>
        <shortName evidence="1">CysRS</shortName>
    </alternativeName>
</protein>
<evidence type="ECO:0000255" key="1">
    <source>
        <dbReference type="HAMAP-Rule" id="MF_00041"/>
    </source>
</evidence>
<name>SYC_ONYPE</name>
<gene>
    <name evidence="1" type="primary">cysS</name>
    <name type="ordered locus">PAM_141</name>
</gene>